<organism>
    <name type="scientific">Helicobacter pylori (strain J99 / ATCC 700824)</name>
    <name type="common">Campylobacter pylori J99</name>
    <dbReference type="NCBI Taxonomy" id="85963"/>
    <lineage>
        <taxon>Bacteria</taxon>
        <taxon>Pseudomonadati</taxon>
        <taxon>Campylobacterota</taxon>
        <taxon>Epsilonproteobacteria</taxon>
        <taxon>Campylobacterales</taxon>
        <taxon>Helicobacteraceae</taxon>
        <taxon>Helicobacter</taxon>
    </lineage>
</organism>
<keyword id="KW-0002">3D-structure</keyword>
<keyword id="KW-0963">Cytoplasm</keyword>
<keyword id="KW-0396">Initiation factor</keyword>
<keyword id="KW-0648">Protein biosynthesis</keyword>
<proteinExistence type="evidence at protein level"/>
<reference key="1">
    <citation type="journal article" date="1999" name="Nature">
        <title>Genomic sequence comparison of two unrelated isolates of the human gastric pathogen Helicobacter pylori.</title>
        <authorList>
            <person name="Alm R.A."/>
            <person name="Ling L.-S.L."/>
            <person name="Moir D.T."/>
            <person name="King B.L."/>
            <person name="Brown E.D."/>
            <person name="Doig P.C."/>
            <person name="Smith D.R."/>
            <person name="Noonan B."/>
            <person name="Guild B.C."/>
            <person name="deJonge B.L."/>
            <person name="Carmel G."/>
            <person name="Tummino P.J."/>
            <person name="Caruso A."/>
            <person name="Uria-Nickelsen M."/>
            <person name="Mills D.M."/>
            <person name="Ives C."/>
            <person name="Gibson R."/>
            <person name="Merberg D."/>
            <person name="Mills S.D."/>
            <person name="Jiang Q."/>
            <person name="Taylor D.E."/>
            <person name="Vovis G.F."/>
            <person name="Trust T.J."/>
        </authorList>
    </citation>
    <scope>NUCLEOTIDE SEQUENCE [LARGE SCALE GENOMIC DNA]</scope>
    <source>
        <strain>J99 / ATCC 700824</strain>
    </source>
</reference>
<gene>
    <name evidence="1" type="primary">infC</name>
    <name type="ordered locus">jhp_0114</name>
</gene>
<dbReference type="EMBL" id="AE001439">
    <property type="protein sequence ID" value="AAD05693.1"/>
    <property type="molecule type" value="Genomic_DNA"/>
</dbReference>
<dbReference type="PIR" id="H71972">
    <property type="entry name" value="H71972"/>
</dbReference>
<dbReference type="RefSeq" id="WP_000089205.1">
    <property type="nucleotide sequence ID" value="NC_000921.1"/>
</dbReference>
<dbReference type="PDB" id="6O6D">
    <property type="method" value="X-ray"/>
    <property type="resolution" value="1.82 A"/>
    <property type="chains" value="A=2-77"/>
</dbReference>
<dbReference type="PDBsum" id="6O6D"/>
<dbReference type="SMR" id="Q9ZMV2"/>
<dbReference type="KEGG" id="hpj:jhp_0114"/>
<dbReference type="PATRIC" id="fig|85963.30.peg.914"/>
<dbReference type="eggNOG" id="COG0290">
    <property type="taxonomic scope" value="Bacteria"/>
</dbReference>
<dbReference type="Proteomes" id="UP000000804">
    <property type="component" value="Chromosome"/>
</dbReference>
<dbReference type="GO" id="GO:0005829">
    <property type="term" value="C:cytosol"/>
    <property type="evidence" value="ECO:0007669"/>
    <property type="project" value="TreeGrafter"/>
</dbReference>
<dbReference type="GO" id="GO:0016020">
    <property type="term" value="C:membrane"/>
    <property type="evidence" value="ECO:0007669"/>
    <property type="project" value="TreeGrafter"/>
</dbReference>
<dbReference type="GO" id="GO:0043022">
    <property type="term" value="F:ribosome binding"/>
    <property type="evidence" value="ECO:0007669"/>
    <property type="project" value="TreeGrafter"/>
</dbReference>
<dbReference type="GO" id="GO:0003743">
    <property type="term" value="F:translation initiation factor activity"/>
    <property type="evidence" value="ECO:0007669"/>
    <property type="project" value="UniProtKB-UniRule"/>
</dbReference>
<dbReference type="GO" id="GO:0032790">
    <property type="term" value="P:ribosome disassembly"/>
    <property type="evidence" value="ECO:0007669"/>
    <property type="project" value="TreeGrafter"/>
</dbReference>
<dbReference type="FunFam" id="3.10.20.80:FF:000001">
    <property type="entry name" value="Translation initiation factor IF-3"/>
    <property type="match status" value="1"/>
</dbReference>
<dbReference type="Gene3D" id="3.30.110.10">
    <property type="entry name" value="Translation initiation factor 3 (IF-3), C-terminal domain"/>
    <property type="match status" value="1"/>
</dbReference>
<dbReference type="Gene3D" id="3.10.20.80">
    <property type="entry name" value="Translation initiation factor 3 (IF-3), N-terminal domain"/>
    <property type="match status" value="1"/>
</dbReference>
<dbReference type="HAMAP" id="MF_00080">
    <property type="entry name" value="IF_3"/>
    <property type="match status" value="1"/>
</dbReference>
<dbReference type="InterPro" id="IPR036788">
    <property type="entry name" value="T_IF-3_C_sf"/>
</dbReference>
<dbReference type="InterPro" id="IPR036787">
    <property type="entry name" value="T_IF-3_N_sf"/>
</dbReference>
<dbReference type="InterPro" id="IPR019813">
    <property type="entry name" value="Translation_initiation_fac3_CS"/>
</dbReference>
<dbReference type="InterPro" id="IPR001288">
    <property type="entry name" value="Translation_initiation_fac_3"/>
</dbReference>
<dbReference type="InterPro" id="IPR019815">
    <property type="entry name" value="Translation_initiation_fac_3_C"/>
</dbReference>
<dbReference type="InterPro" id="IPR019814">
    <property type="entry name" value="Translation_initiation_fac_3_N"/>
</dbReference>
<dbReference type="NCBIfam" id="TIGR00168">
    <property type="entry name" value="infC"/>
    <property type="match status" value="1"/>
</dbReference>
<dbReference type="PANTHER" id="PTHR10938">
    <property type="entry name" value="TRANSLATION INITIATION FACTOR IF-3"/>
    <property type="match status" value="1"/>
</dbReference>
<dbReference type="PANTHER" id="PTHR10938:SF0">
    <property type="entry name" value="TRANSLATION INITIATION FACTOR IF-3, MITOCHONDRIAL"/>
    <property type="match status" value="1"/>
</dbReference>
<dbReference type="Pfam" id="PF00707">
    <property type="entry name" value="IF3_C"/>
    <property type="match status" value="1"/>
</dbReference>
<dbReference type="Pfam" id="PF05198">
    <property type="entry name" value="IF3_N"/>
    <property type="match status" value="1"/>
</dbReference>
<dbReference type="SUPFAM" id="SSF55200">
    <property type="entry name" value="Translation initiation factor IF3, C-terminal domain"/>
    <property type="match status" value="1"/>
</dbReference>
<dbReference type="SUPFAM" id="SSF54364">
    <property type="entry name" value="Translation initiation factor IF3, N-terminal domain"/>
    <property type="match status" value="1"/>
</dbReference>
<dbReference type="PROSITE" id="PS00938">
    <property type="entry name" value="IF3"/>
    <property type="match status" value="1"/>
</dbReference>
<evidence type="ECO:0000255" key="1">
    <source>
        <dbReference type="HAMAP-Rule" id="MF_00080"/>
    </source>
</evidence>
<evidence type="ECO:0000256" key="2">
    <source>
        <dbReference type="SAM" id="MobiDB-lite"/>
    </source>
</evidence>
<evidence type="ECO:0007829" key="3">
    <source>
        <dbReference type="PDB" id="6O6D"/>
    </source>
</evidence>
<protein>
    <recommendedName>
        <fullName evidence="1">Translation initiation factor IF-3</fullName>
    </recommendedName>
</protein>
<accession>Q9ZMV2</accession>
<comment type="function">
    <text evidence="1">IF-3 binds to the 30S ribosomal subunit and shifts the equilibrium between 70S ribosomes and their 50S and 30S subunits in favor of the free subunits, thus enhancing the availability of 30S subunits on which protein synthesis initiation begins.</text>
</comment>
<comment type="subunit">
    <text evidence="1">Monomer.</text>
</comment>
<comment type="subcellular location">
    <subcellularLocation>
        <location evidence="1">Cytoplasm</location>
    </subcellularLocation>
</comment>
<comment type="similarity">
    <text evidence="1">Belongs to the IF-3 family.</text>
</comment>
<feature type="chain" id="PRO_0000177526" description="Translation initiation factor IF-3">
    <location>
        <begin position="1"/>
        <end position="203"/>
    </location>
</feature>
<feature type="region of interest" description="Disordered" evidence="2">
    <location>
        <begin position="172"/>
        <end position="203"/>
    </location>
</feature>
<feature type="compositionally biased region" description="Basic and acidic residues" evidence="2">
    <location>
        <begin position="172"/>
        <end position="182"/>
    </location>
</feature>
<feature type="helix" evidence="3">
    <location>
        <begin position="9"/>
        <end position="11"/>
    </location>
</feature>
<feature type="strand" evidence="3">
    <location>
        <begin position="17"/>
        <end position="21"/>
    </location>
</feature>
<feature type="strand" evidence="3">
    <location>
        <begin position="26"/>
        <end position="30"/>
    </location>
</feature>
<feature type="helix" evidence="3">
    <location>
        <begin position="32"/>
        <end position="42"/>
    </location>
</feature>
<feature type="strand" evidence="3">
    <location>
        <begin position="45"/>
        <end position="55"/>
    </location>
</feature>
<feature type="strand" evidence="3">
    <location>
        <begin position="57"/>
        <end position="61"/>
    </location>
</feature>
<feature type="helix" evidence="3">
    <location>
        <begin position="63"/>
        <end position="69"/>
    </location>
</feature>
<name>IF3_HELPJ</name>
<sequence>MSRNEVLLNGDINFKEVRCVGDNGEVYGIISSKEALKIAQNLGLDLVLISASAKPPVCKVMDYNKFRYQNEKKIKEAKKKQKQIEIKEIKLSTQIAQNDINYKVKHAREFIESNKHVKFKVVLKGRESQNSKAGLDVLFRVQTMMQDLANPEKEPKTEGRFVSWMFVPKAKEAPKNEKKTKENNPPFNRINLMKGENHAKNED</sequence>